<dbReference type="EC" id="1.6.5.-" evidence="1"/>
<dbReference type="EC" id="1.7.1.17" evidence="1"/>
<dbReference type="EMBL" id="CP000527">
    <property type="protein sequence ID" value="ABM27722.1"/>
    <property type="molecule type" value="Genomic_DNA"/>
</dbReference>
<dbReference type="RefSeq" id="WP_010939818.1">
    <property type="nucleotide sequence ID" value="NC_008751.1"/>
</dbReference>
<dbReference type="SMR" id="A1VBA6"/>
<dbReference type="KEGG" id="dvl:Dvul_0699"/>
<dbReference type="HOGENOM" id="CLU_088964_1_0_7"/>
<dbReference type="Proteomes" id="UP000009173">
    <property type="component" value="Chromosome"/>
</dbReference>
<dbReference type="GO" id="GO:0009055">
    <property type="term" value="F:electron transfer activity"/>
    <property type="evidence" value="ECO:0007669"/>
    <property type="project" value="UniProtKB-UniRule"/>
</dbReference>
<dbReference type="GO" id="GO:0010181">
    <property type="term" value="F:FMN binding"/>
    <property type="evidence" value="ECO:0007669"/>
    <property type="project" value="UniProtKB-UniRule"/>
</dbReference>
<dbReference type="GO" id="GO:0016652">
    <property type="term" value="F:oxidoreductase activity, acting on NAD(P)H as acceptor"/>
    <property type="evidence" value="ECO:0007669"/>
    <property type="project" value="UniProtKB-UniRule"/>
</dbReference>
<dbReference type="GO" id="GO:0016655">
    <property type="term" value="F:oxidoreductase activity, acting on NAD(P)H, quinone or similar compound as acceptor"/>
    <property type="evidence" value="ECO:0007669"/>
    <property type="project" value="InterPro"/>
</dbReference>
<dbReference type="Gene3D" id="3.40.50.360">
    <property type="match status" value="1"/>
</dbReference>
<dbReference type="HAMAP" id="MF_01216">
    <property type="entry name" value="Azoreductase_type1"/>
    <property type="match status" value="1"/>
</dbReference>
<dbReference type="InterPro" id="IPR003680">
    <property type="entry name" value="Flavodoxin_fold"/>
</dbReference>
<dbReference type="InterPro" id="IPR029039">
    <property type="entry name" value="Flavoprotein-like_sf"/>
</dbReference>
<dbReference type="InterPro" id="IPR050104">
    <property type="entry name" value="FMN-dep_NADH:Q_OxRdtase_AzoR1"/>
</dbReference>
<dbReference type="InterPro" id="IPR023048">
    <property type="entry name" value="NADH:quinone_OxRdtase_FMN_depd"/>
</dbReference>
<dbReference type="PANTHER" id="PTHR43741">
    <property type="entry name" value="FMN-DEPENDENT NADH-AZOREDUCTASE 1"/>
    <property type="match status" value="1"/>
</dbReference>
<dbReference type="PANTHER" id="PTHR43741:SF4">
    <property type="entry name" value="FMN-DEPENDENT NADH:QUINONE OXIDOREDUCTASE"/>
    <property type="match status" value="1"/>
</dbReference>
<dbReference type="Pfam" id="PF02525">
    <property type="entry name" value="Flavodoxin_2"/>
    <property type="match status" value="1"/>
</dbReference>
<dbReference type="SUPFAM" id="SSF52218">
    <property type="entry name" value="Flavoproteins"/>
    <property type="match status" value="1"/>
</dbReference>
<organism>
    <name type="scientific">Nitratidesulfovibrio vulgaris (strain DP4)</name>
    <name type="common">Desulfovibrio vulgaris</name>
    <dbReference type="NCBI Taxonomy" id="391774"/>
    <lineage>
        <taxon>Bacteria</taxon>
        <taxon>Pseudomonadati</taxon>
        <taxon>Thermodesulfobacteriota</taxon>
        <taxon>Desulfovibrionia</taxon>
        <taxon>Desulfovibrionales</taxon>
        <taxon>Desulfovibrionaceae</taxon>
        <taxon>Nitratidesulfovibrio</taxon>
    </lineage>
</organism>
<sequence>MATILYIKASPRGERSHSVTVADAFVKAYSEANPGDVVRVLDVFEADLPAFGTDAVVARYLSGQGDPLSPAQEAAWAAVKRQVEDFKTADKYVIALPMWNFSIPWRLKQFFDIIIQPGLTFSYDEQGYHGLVTGRPVLVSYARGGAYPAGTPAEGWDFQKRYLEHILGFIGFTDIRSVVVEPTLAGGPDTAQAKRAEAVEQARRMALEF</sequence>
<evidence type="ECO:0000255" key="1">
    <source>
        <dbReference type="HAMAP-Rule" id="MF_01216"/>
    </source>
</evidence>
<reference key="1">
    <citation type="journal article" date="2009" name="Environ. Microbiol.">
        <title>Contribution of mobile genetic elements to Desulfovibrio vulgaris genome plasticity.</title>
        <authorList>
            <person name="Walker C.B."/>
            <person name="Stolyar S."/>
            <person name="Chivian D."/>
            <person name="Pinel N."/>
            <person name="Gabster J.A."/>
            <person name="Dehal P.S."/>
            <person name="He Z."/>
            <person name="Yang Z.K."/>
            <person name="Yen H.C."/>
            <person name="Zhou J."/>
            <person name="Wall J.D."/>
            <person name="Hazen T.C."/>
            <person name="Arkin A.P."/>
            <person name="Stahl D.A."/>
        </authorList>
    </citation>
    <scope>NUCLEOTIDE SEQUENCE [LARGE SCALE GENOMIC DNA]</scope>
    <source>
        <strain>DP4</strain>
    </source>
</reference>
<gene>
    <name evidence="1" type="primary">azoR</name>
    <name type="ordered locus">Dvul_0699</name>
</gene>
<accession>A1VBA6</accession>
<proteinExistence type="inferred from homology"/>
<keyword id="KW-0285">Flavoprotein</keyword>
<keyword id="KW-0288">FMN</keyword>
<keyword id="KW-0520">NAD</keyword>
<keyword id="KW-0560">Oxidoreductase</keyword>
<name>AZOR_NITV4</name>
<protein>
    <recommendedName>
        <fullName evidence="1">FMN-dependent NADH:quinone oxidoreductase</fullName>
        <ecNumber evidence="1">1.6.5.-</ecNumber>
    </recommendedName>
    <alternativeName>
        <fullName evidence="1">Azo-dye reductase</fullName>
    </alternativeName>
    <alternativeName>
        <fullName evidence="1">FMN-dependent NADH-azo compound oxidoreductase</fullName>
    </alternativeName>
    <alternativeName>
        <fullName evidence="1">FMN-dependent NADH-azoreductase</fullName>
        <ecNumber evidence="1">1.7.1.17</ecNumber>
    </alternativeName>
</protein>
<comment type="function">
    <text evidence="1">Quinone reductase that provides resistance to thiol-specific stress caused by electrophilic quinones.</text>
</comment>
<comment type="function">
    <text evidence="1">Also exhibits azoreductase activity. Catalyzes the reductive cleavage of the azo bond in aromatic azo compounds to the corresponding amines.</text>
</comment>
<comment type="catalytic activity">
    <reaction evidence="1">
        <text>2 a quinone + NADH + H(+) = 2 a 1,4-benzosemiquinone + NAD(+)</text>
        <dbReference type="Rhea" id="RHEA:65952"/>
        <dbReference type="ChEBI" id="CHEBI:15378"/>
        <dbReference type="ChEBI" id="CHEBI:57540"/>
        <dbReference type="ChEBI" id="CHEBI:57945"/>
        <dbReference type="ChEBI" id="CHEBI:132124"/>
        <dbReference type="ChEBI" id="CHEBI:134225"/>
    </reaction>
</comment>
<comment type="catalytic activity">
    <reaction evidence="1">
        <text>N,N-dimethyl-1,4-phenylenediamine + anthranilate + 2 NAD(+) = 2-(4-dimethylaminophenyl)diazenylbenzoate + 2 NADH + 2 H(+)</text>
        <dbReference type="Rhea" id="RHEA:55872"/>
        <dbReference type="ChEBI" id="CHEBI:15378"/>
        <dbReference type="ChEBI" id="CHEBI:15783"/>
        <dbReference type="ChEBI" id="CHEBI:16567"/>
        <dbReference type="ChEBI" id="CHEBI:57540"/>
        <dbReference type="ChEBI" id="CHEBI:57945"/>
        <dbReference type="ChEBI" id="CHEBI:71579"/>
        <dbReference type="EC" id="1.7.1.17"/>
    </reaction>
</comment>
<comment type="cofactor">
    <cofactor evidence="1">
        <name>FMN</name>
        <dbReference type="ChEBI" id="CHEBI:58210"/>
    </cofactor>
    <text evidence="1">Binds 1 FMN per subunit.</text>
</comment>
<comment type="subunit">
    <text evidence="1">Homodimer.</text>
</comment>
<comment type="similarity">
    <text evidence="1">Belongs to the azoreductase type 1 family.</text>
</comment>
<feature type="chain" id="PRO_1000066502" description="FMN-dependent NADH:quinone oxidoreductase">
    <location>
        <begin position="1"/>
        <end position="209"/>
    </location>
</feature>
<feature type="binding site" evidence="1">
    <location>
        <position position="10"/>
    </location>
    <ligand>
        <name>FMN</name>
        <dbReference type="ChEBI" id="CHEBI:58210"/>
    </ligand>
</feature>
<feature type="binding site" evidence="1">
    <location>
        <begin position="16"/>
        <end position="18"/>
    </location>
    <ligand>
        <name>FMN</name>
        <dbReference type="ChEBI" id="CHEBI:58210"/>
    </ligand>
</feature>
<feature type="binding site" evidence="1">
    <location>
        <begin position="98"/>
        <end position="101"/>
    </location>
    <ligand>
        <name>FMN</name>
        <dbReference type="ChEBI" id="CHEBI:58210"/>
    </ligand>
</feature>